<feature type="signal peptide" evidence="3">
    <location>
        <begin position="1"/>
        <end position="22"/>
    </location>
</feature>
<feature type="chain" id="PRO_0000024663" description="Midkine">
    <location>
        <begin position="23"/>
        <end position="140"/>
    </location>
</feature>
<feature type="site" description="Required for high affinity binding to PTRZ1 by interacting with the chondroitin sulfate chains of PTRZ1" evidence="5">
    <location>
        <position position="100"/>
    </location>
</feature>
<feature type="disulfide bond" evidence="1">
    <location>
        <begin position="34"/>
        <end position="58"/>
    </location>
</feature>
<feature type="disulfide bond" evidence="1">
    <location>
        <begin position="42"/>
        <end position="67"/>
    </location>
</feature>
<feature type="disulfide bond" evidence="1">
    <location>
        <begin position="49"/>
        <end position="71"/>
    </location>
</feature>
<feature type="disulfide bond" evidence="1">
    <location>
        <begin position="81"/>
        <end position="113"/>
    </location>
</feature>
<feature type="disulfide bond" evidence="1">
    <location>
        <begin position="91"/>
        <end position="123"/>
    </location>
</feature>
<feature type="mutagenesis site" description="Decreases affinity binding to PTPRZ1. Decreases affinity binding to PTPRZ1; when associated with Q-105 and Q-106. Decreases neuron migration. Decreases neuron migration; when associated with Q-105 and Q-106." evidence="5">
    <original>R</original>
    <variation>Q</variation>
    <location>
        <position position="100"/>
    </location>
</feature>
<feature type="mutagenesis site" description="Does not affect binding with PTPRZ1. Does not affect binding with PTPRZ1; when associated with Q-106. Does not affect positive regulation of neuron migration." evidence="5">
    <original>K</original>
    <variation>Q</variation>
    <location>
        <position position="105"/>
    </location>
</feature>
<feature type="mutagenesis site" description="Does not affect binding with PTPRZ1. Does not affect binding with PTPRZ1; when associated with Q-105. Does not affect positive regulation of neuron migration." evidence="5">
    <original>K</original>
    <variation>Q</variation>
    <location>
        <position position="106"/>
    </location>
</feature>
<accession>P12025</accession>
<proteinExistence type="evidence at protein level"/>
<dbReference type="EMBL" id="M19662">
    <property type="protein sequence ID" value="AAA39710.1"/>
    <property type="molecule type" value="mRNA"/>
</dbReference>
<dbReference type="EMBL" id="M34327">
    <property type="protein sequence ID" value="AAA39712.1"/>
    <property type="molecule type" value="mRNA"/>
</dbReference>
<dbReference type="EMBL" id="M34328">
    <property type="protein sequence ID" value="AAA39715.1"/>
    <property type="molecule type" value="mRNA"/>
</dbReference>
<dbReference type="EMBL" id="M35833">
    <property type="protein sequence ID" value="AAA39714.1"/>
    <property type="molecule type" value="mRNA"/>
</dbReference>
<dbReference type="EMBL" id="M34094">
    <property type="protein sequence ID" value="AAA39717.1"/>
    <property type="molecule type" value="Genomic_DNA"/>
</dbReference>
<dbReference type="EMBL" id="BC012244">
    <property type="protein sequence ID" value="AAH12244.1"/>
    <property type="molecule type" value="mRNA"/>
</dbReference>
<dbReference type="CCDS" id="CCDS16440.1"/>
<dbReference type="PIR" id="A27684">
    <property type="entry name" value="A27684"/>
</dbReference>
<dbReference type="PIR" id="A35305">
    <property type="entry name" value="A35305"/>
</dbReference>
<dbReference type="RefSeq" id="NP_001012335.1">
    <property type="nucleotide sequence ID" value="NM_001012335.3"/>
</dbReference>
<dbReference type="RefSeq" id="NP_001012336.1">
    <property type="nucleotide sequence ID" value="NM_001012336.3"/>
</dbReference>
<dbReference type="RefSeq" id="NP_001278410.1">
    <property type="nucleotide sequence ID" value="NM_001291481.2"/>
</dbReference>
<dbReference type="RefSeq" id="NP_034914.1">
    <property type="nucleotide sequence ID" value="NM_010784.6"/>
</dbReference>
<dbReference type="SMR" id="P12025"/>
<dbReference type="BioGRID" id="201369">
    <property type="interactions" value="4"/>
</dbReference>
<dbReference type="DIP" id="DIP-5791N"/>
<dbReference type="FunCoup" id="P12025">
    <property type="interactions" value="207"/>
</dbReference>
<dbReference type="IntAct" id="P12025">
    <property type="interactions" value="3"/>
</dbReference>
<dbReference type="STRING" id="10090.ENSMUSP00000028672"/>
<dbReference type="iPTMnet" id="P12025"/>
<dbReference type="PhosphoSitePlus" id="P12025"/>
<dbReference type="PaxDb" id="10090-ENSMUSP00000028672"/>
<dbReference type="PeptideAtlas" id="P12025"/>
<dbReference type="ProteomicsDB" id="290257"/>
<dbReference type="DNASU" id="17242"/>
<dbReference type="Ensembl" id="ENSMUST00000028672.13">
    <property type="protein sequence ID" value="ENSMUSP00000028672.7"/>
    <property type="gene ID" value="ENSMUSG00000027239.15"/>
</dbReference>
<dbReference type="Ensembl" id="ENSMUST00000069423.13">
    <property type="protein sequence ID" value="ENSMUSP00000068413.7"/>
    <property type="gene ID" value="ENSMUSG00000027239.15"/>
</dbReference>
<dbReference type="Ensembl" id="ENSMUST00000090602.6">
    <property type="protein sequence ID" value="ENSMUSP00000088090.6"/>
    <property type="gene ID" value="ENSMUSG00000027239.15"/>
</dbReference>
<dbReference type="Ensembl" id="ENSMUST00000111309.8">
    <property type="protein sequence ID" value="ENSMUSP00000106941.2"/>
    <property type="gene ID" value="ENSMUSG00000027239.15"/>
</dbReference>
<dbReference type="GeneID" id="17242"/>
<dbReference type="KEGG" id="mmu:17242"/>
<dbReference type="UCSC" id="uc008kww.2">
    <property type="organism name" value="mouse"/>
</dbReference>
<dbReference type="AGR" id="MGI:96949"/>
<dbReference type="CTD" id="4192"/>
<dbReference type="MGI" id="MGI:96949">
    <property type="gene designation" value="Mdk"/>
</dbReference>
<dbReference type="VEuPathDB" id="HostDB:ENSMUSG00000027239"/>
<dbReference type="eggNOG" id="ENOG502S022">
    <property type="taxonomic scope" value="Eukaryota"/>
</dbReference>
<dbReference type="GeneTree" id="ENSGT00390000007640"/>
<dbReference type="HOGENOM" id="CLU_136864_0_0_1"/>
<dbReference type="InParanoid" id="P12025"/>
<dbReference type="OMA" id="GNECAEW"/>
<dbReference type="OrthoDB" id="8818336at2759"/>
<dbReference type="PhylomeDB" id="P12025"/>
<dbReference type="TreeFam" id="TF332376"/>
<dbReference type="Reactome" id="R-MMU-201556">
    <property type="pathway name" value="Signaling by ALK"/>
</dbReference>
<dbReference type="Reactome" id="R-MMU-9851151">
    <property type="pathway name" value="MDK and PTN in ALK signaling"/>
</dbReference>
<dbReference type="BioGRID-ORCS" id="17242">
    <property type="hits" value="1 hit in 78 CRISPR screens"/>
</dbReference>
<dbReference type="ChiTaRS" id="Mdk">
    <property type="organism name" value="mouse"/>
</dbReference>
<dbReference type="PRO" id="PR:P12025"/>
<dbReference type="Proteomes" id="UP000000589">
    <property type="component" value="Chromosome 2"/>
</dbReference>
<dbReference type="RNAct" id="P12025">
    <property type="molecule type" value="protein"/>
</dbReference>
<dbReference type="Bgee" id="ENSMUSG00000027239">
    <property type="expression patterns" value="Expressed in hindlimb bud and 185 other cell types or tissues"/>
</dbReference>
<dbReference type="GO" id="GO:0042995">
    <property type="term" value="C:cell projection"/>
    <property type="evidence" value="ECO:0007669"/>
    <property type="project" value="Ensembl"/>
</dbReference>
<dbReference type="GO" id="GO:0005576">
    <property type="term" value="C:extracellular region"/>
    <property type="evidence" value="ECO:0007669"/>
    <property type="project" value="UniProtKB-SubCell"/>
</dbReference>
<dbReference type="GO" id="GO:0035374">
    <property type="term" value="F:chondroitin sulfate binding"/>
    <property type="evidence" value="ECO:0000314"/>
    <property type="project" value="UniProtKB"/>
</dbReference>
<dbReference type="GO" id="GO:0008083">
    <property type="term" value="F:growth factor activity"/>
    <property type="evidence" value="ECO:0007669"/>
    <property type="project" value="UniProtKB-KW"/>
</dbReference>
<dbReference type="GO" id="GO:1904399">
    <property type="term" value="F:heparan sulfate binding"/>
    <property type="evidence" value="ECO:0000250"/>
    <property type="project" value="UniProtKB"/>
</dbReference>
<dbReference type="GO" id="GO:0008201">
    <property type="term" value="F:heparin binding"/>
    <property type="evidence" value="ECO:0000314"/>
    <property type="project" value="UniProtKB"/>
</dbReference>
<dbReference type="GO" id="GO:0030325">
    <property type="term" value="P:adrenal gland development"/>
    <property type="evidence" value="ECO:0000250"/>
    <property type="project" value="UniProtKB"/>
</dbReference>
<dbReference type="GO" id="GO:0001662">
    <property type="term" value="P:behavioral fear response"/>
    <property type="evidence" value="ECO:0000315"/>
    <property type="project" value="DFLAT"/>
</dbReference>
<dbReference type="GO" id="GO:0021681">
    <property type="term" value="P:cerebellar granular layer development"/>
    <property type="evidence" value="ECO:0000315"/>
    <property type="project" value="DFLAT"/>
</dbReference>
<dbReference type="GO" id="GO:0021987">
    <property type="term" value="P:cerebral cortex development"/>
    <property type="evidence" value="ECO:0000270"/>
    <property type="project" value="DFLAT"/>
</dbReference>
<dbReference type="GO" id="GO:0007010">
    <property type="term" value="P:cytoskeleton organization"/>
    <property type="evidence" value="ECO:0000315"/>
    <property type="project" value="UniProtKB"/>
</dbReference>
<dbReference type="GO" id="GO:0030421">
    <property type="term" value="P:defecation"/>
    <property type="evidence" value="ECO:0000315"/>
    <property type="project" value="DFLAT"/>
</dbReference>
<dbReference type="GO" id="GO:0021542">
    <property type="term" value="P:dentate gyrus development"/>
    <property type="evidence" value="ECO:0000270"/>
    <property type="project" value="DFLAT"/>
</dbReference>
<dbReference type="GO" id="GO:0044849">
    <property type="term" value="P:estrous cycle"/>
    <property type="evidence" value="ECO:0000315"/>
    <property type="project" value="UniProtKB"/>
</dbReference>
<dbReference type="GO" id="GO:0106091">
    <property type="term" value="P:glial cell projection elongation"/>
    <property type="evidence" value="ECO:0000314"/>
    <property type="project" value="UniProtKB"/>
</dbReference>
<dbReference type="GO" id="GO:0021766">
    <property type="term" value="P:hippocampus development"/>
    <property type="evidence" value="ECO:0000315"/>
    <property type="project" value="DFLAT"/>
</dbReference>
<dbReference type="GO" id="GO:0035556">
    <property type="term" value="P:intracellular signal transduction"/>
    <property type="evidence" value="ECO:0000250"/>
    <property type="project" value="UniProtKB"/>
</dbReference>
<dbReference type="GO" id="GO:0002232">
    <property type="term" value="P:leukocyte chemotaxis involved in inflammatory response"/>
    <property type="evidence" value="ECO:0000315"/>
    <property type="project" value="UniProtKB"/>
</dbReference>
<dbReference type="GO" id="GO:0090090">
    <property type="term" value="P:negative regulation of canonical Wnt signaling pathway"/>
    <property type="evidence" value="ECO:0000315"/>
    <property type="project" value="UniProtKB"/>
</dbReference>
<dbReference type="GO" id="GO:0010667">
    <property type="term" value="P:negative regulation of cardiac muscle cell apoptotic process"/>
    <property type="evidence" value="ECO:0000315"/>
    <property type="project" value="UniProtKB"/>
</dbReference>
<dbReference type="GO" id="GO:0007162">
    <property type="term" value="P:negative regulation of cell adhesion"/>
    <property type="evidence" value="ECO:0000314"/>
    <property type="project" value="UniProtKB"/>
</dbReference>
<dbReference type="GO" id="GO:1904036">
    <property type="term" value="P:negative regulation of epithelial cell apoptotic process"/>
    <property type="evidence" value="ECO:0000315"/>
    <property type="project" value="UniProtKB"/>
</dbReference>
<dbReference type="GO" id="GO:0106015">
    <property type="term" value="P:negative regulation of inflammatory response to wounding"/>
    <property type="evidence" value="ECO:0000315"/>
    <property type="project" value="UniProtKB"/>
</dbReference>
<dbReference type="GO" id="GO:0043524">
    <property type="term" value="P:negative regulation of neuron apoptotic process"/>
    <property type="evidence" value="ECO:0000315"/>
    <property type="project" value="UniProtKB"/>
</dbReference>
<dbReference type="GO" id="GO:0030279">
    <property type="term" value="P:negative regulation of ossification"/>
    <property type="evidence" value="ECO:0000315"/>
    <property type="project" value="UniProtKB"/>
</dbReference>
<dbReference type="GO" id="GO:0045590">
    <property type="term" value="P:negative regulation of regulatory T cell differentiation"/>
    <property type="evidence" value="ECO:0000250"/>
    <property type="project" value="UniProtKB"/>
</dbReference>
<dbReference type="GO" id="GO:0048477">
    <property type="term" value="P:oogenesis"/>
    <property type="evidence" value="ECO:0000315"/>
    <property type="project" value="UniProtKB"/>
</dbReference>
<dbReference type="GO" id="GO:1905653">
    <property type="term" value="P:positive regulation of artery morphogenesis"/>
    <property type="evidence" value="ECO:0000315"/>
    <property type="project" value="UniProtKB"/>
</dbReference>
<dbReference type="GO" id="GO:1905555">
    <property type="term" value="P:positive regulation of blood vessel branching"/>
    <property type="evidence" value="ECO:0000250"/>
    <property type="project" value="UniProtKB"/>
</dbReference>
<dbReference type="GO" id="GO:0061036">
    <property type="term" value="P:positive regulation of cartilage development"/>
    <property type="evidence" value="ECO:0000315"/>
    <property type="project" value="UniProtKB"/>
</dbReference>
<dbReference type="GO" id="GO:0045785">
    <property type="term" value="P:positive regulation of cell adhesion"/>
    <property type="evidence" value="ECO:0000250"/>
    <property type="project" value="UniProtKB"/>
</dbReference>
<dbReference type="GO" id="GO:0051781">
    <property type="term" value="P:positive regulation of cell division"/>
    <property type="evidence" value="ECO:0007669"/>
    <property type="project" value="UniProtKB-KW"/>
</dbReference>
<dbReference type="GO" id="GO:0030335">
    <property type="term" value="P:positive regulation of cell migration"/>
    <property type="evidence" value="ECO:0000250"/>
    <property type="project" value="UniProtKB"/>
</dbReference>
<dbReference type="GO" id="GO:0045893">
    <property type="term" value="P:positive regulation of DNA-templated transcription"/>
    <property type="evidence" value="ECO:0000315"/>
    <property type="project" value="DFLAT"/>
</dbReference>
<dbReference type="GO" id="GO:0010718">
    <property type="term" value="P:positive regulation of epithelial to mesenchymal transition"/>
    <property type="evidence" value="ECO:0000250"/>
    <property type="project" value="UniProtKB"/>
</dbReference>
<dbReference type="GO" id="GO:2000347">
    <property type="term" value="P:positive regulation of hepatocyte proliferation"/>
    <property type="evidence" value="ECO:0000315"/>
    <property type="project" value="UniProtKB"/>
</dbReference>
<dbReference type="GO" id="GO:0050729">
    <property type="term" value="P:positive regulation of inflammatory response"/>
    <property type="evidence" value="ECO:0000250"/>
    <property type="project" value="UniProtKB"/>
</dbReference>
<dbReference type="GO" id="GO:0106016">
    <property type="term" value="P:positive regulation of inflammatory response to wounding"/>
    <property type="evidence" value="ECO:0000315"/>
    <property type="project" value="UniProtKB"/>
</dbReference>
<dbReference type="GO" id="GO:0032735">
    <property type="term" value="P:positive regulation of interleukin-12 production"/>
    <property type="evidence" value="ECO:0000250"/>
    <property type="project" value="UniProtKB"/>
</dbReference>
<dbReference type="GO" id="GO:0010838">
    <property type="term" value="P:positive regulation of keratinocyte proliferation"/>
    <property type="evidence" value="ECO:0000250"/>
    <property type="project" value="UniProtKB"/>
</dbReference>
<dbReference type="GO" id="GO:1904996">
    <property type="term" value="P:positive regulation of leukocyte adhesion to vascular endothelial cell"/>
    <property type="evidence" value="ECO:0000315"/>
    <property type="project" value="UniProtKB"/>
</dbReference>
<dbReference type="GO" id="GO:1903039">
    <property type="term" value="P:positive regulation of leukocyte cell-cell adhesion"/>
    <property type="evidence" value="ECO:0000250"/>
    <property type="project" value="UniProtKB"/>
</dbReference>
<dbReference type="GO" id="GO:0002690">
    <property type="term" value="P:positive regulation of leukocyte chemotaxis"/>
    <property type="evidence" value="ECO:0000315"/>
    <property type="project" value="UniProtKB"/>
</dbReference>
<dbReference type="GO" id="GO:0010759">
    <property type="term" value="P:positive regulation of macrophage chemotaxis"/>
    <property type="evidence" value="ECO:0000315"/>
    <property type="project" value="UniProtKB"/>
</dbReference>
<dbReference type="GO" id="GO:2000179">
    <property type="term" value="P:positive regulation of neural precursor cell proliferation"/>
    <property type="evidence" value="ECO:0000315"/>
    <property type="project" value="UniProtKB"/>
</dbReference>
<dbReference type="GO" id="GO:2001224">
    <property type="term" value="P:positive regulation of neuron migration"/>
    <property type="evidence" value="ECO:0000250"/>
    <property type="project" value="UniProtKB"/>
</dbReference>
<dbReference type="GO" id="GO:0010976">
    <property type="term" value="P:positive regulation of neuron projection development"/>
    <property type="evidence" value="ECO:0000250"/>
    <property type="project" value="UniProtKB"/>
</dbReference>
<dbReference type="GO" id="GO:0090023">
    <property type="term" value="P:positive regulation of neutrophil chemotaxis"/>
    <property type="evidence" value="ECO:0000315"/>
    <property type="project" value="UniProtKB"/>
</dbReference>
<dbReference type="GO" id="GO:2000391">
    <property type="term" value="P:positive regulation of neutrophil extravasation"/>
    <property type="evidence" value="ECO:0000315"/>
    <property type="project" value="UniProtKB"/>
</dbReference>
<dbReference type="GO" id="GO:0048714">
    <property type="term" value="P:positive regulation of oligodendrocyte differentiation"/>
    <property type="evidence" value="ECO:0000250"/>
    <property type="project" value="UniProtKB"/>
</dbReference>
<dbReference type="GO" id="GO:0071673">
    <property type="term" value="P:positive regulation of smooth muscle cell chemotaxis"/>
    <property type="evidence" value="ECO:0000250"/>
    <property type="project" value="UniProtKB"/>
</dbReference>
<dbReference type="GO" id="GO:1900026">
    <property type="term" value="P:positive regulation of substrate adhesion-dependent cell spreading"/>
    <property type="evidence" value="ECO:0000315"/>
    <property type="project" value="UniProtKB"/>
</dbReference>
<dbReference type="GO" id="GO:0045582">
    <property type="term" value="P:positive regulation of T cell differentiation"/>
    <property type="evidence" value="ECO:0000315"/>
    <property type="project" value="UniProtKB"/>
</dbReference>
<dbReference type="GO" id="GO:1905564">
    <property type="term" value="P:positive regulation of vascular endothelial cell proliferation"/>
    <property type="evidence" value="ECO:0000315"/>
    <property type="project" value="UniProtKB"/>
</dbReference>
<dbReference type="GO" id="GO:0050795">
    <property type="term" value="P:regulation of behavior"/>
    <property type="evidence" value="ECO:0000315"/>
    <property type="project" value="DFLAT"/>
</dbReference>
<dbReference type="GO" id="GO:0046850">
    <property type="term" value="P:regulation of bone remodeling"/>
    <property type="evidence" value="ECO:0000315"/>
    <property type="project" value="UniProtKB"/>
</dbReference>
<dbReference type="GO" id="GO:0032330">
    <property type="term" value="P:regulation of chondrocyte differentiation"/>
    <property type="evidence" value="ECO:0000315"/>
    <property type="project" value="UniProtKB"/>
</dbReference>
<dbReference type="GO" id="GO:0010996">
    <property type="term" value="P:response to auditory stimulus"/>
    <property type="evidence" value="ECO:0000315"/>
    <property type="project" value="UniProtKB"/>
</dbReference>
<dbReference type="GO" id="GO:0051384">
    <property type="term" value="P:response to glucocorticoid"/>
    <property type="evidence" value="ECO:0007669"/>
    <property type="project" value="Ensembl"/>
</dbReference>
<dbReference type="GO" id="GO:0009611">
    <property type="term" value="P:response to wounding"/>
    <property type="evidence" value="ECO:0000314"/>
    <property type="project" value="UniProtKB"/>
</dbReference>
<dbReference type="GO" id="GO:0009410">
    <property type="term" value="P:response to xenobiotic stimulus"/>
    <property type="evidence" value="ECO:0007669"/>
    <property type="project" value="Ensembl"/>
</dbReference>
<dbReference type="GO" id="GO:0007614">
    <property type="term" value="P:short-term memory"/>
    <property type="evidence" value="ECO:0000315"/>
    <property type="project" value="DFLAT"/>
</dbReference>
<dbReference type="GO" id="GO:0002286">
    <property type="term" value="P:T cell activation involved in immune response"/>
    <property type="evidence" value="ECO:0000315"/>
    <property type="project" value="UniProtKB"/>
</dbReference>
<dbReference type="GO" id="GO:0042246">
    <property type="term" value="P:tissue regeneration"/>
    <property type="evidence" value="ECO:0000315"/>
    <property type="project" value="UniProtKB"/>
</dbReference>
<dbReference type="FunFam" id="2.20.60.10:FF:000002">
    <property type="entry name" value="Midkine a"/>
    <property type="match status" value="1"/>
</dbReference>
<dbReference type="FunFam" id="2.30.90.10:FF:000001">
    <property type="entry name" value="Pleiotrophin"/>
    <property type="match status" value="1"/>
</dbReference>
<dbReference type="Gene3D" id="2.30.90.10">
    <property type="entry name" value="Heparin-binding Growth Factor, Midkine, Chain A- C-terminal Domain"/>
    <property type="match status" value="1"/>
</dbReference>
<dbReference type="Gene3D" id="2.20.60.10">
    <property type="entry name" value="Pleiotrophin/Midkine, N-terminal domain"/>
    <property type="match status" value="1"/>
</dbReference>
<dbReference type="InterPro" id="IPR000762">
    <property type="entry name" value="Midkine_heparin-bd_GF"/>
</dbReference>
<dbReference type="InterPro" id="IPR020090">
    <property type="entry name" value="PTN/MK_C_dom"/>
</dbReference>
<dbReference type="InterPro" id="IPR038130">
    <property type="entry name" value="PTN/MK_C_dom_sf"/>
</dbReference>
<dbReference type="InterPro" id="IPR020091">
    <property type="entry name" value="PTN/MK_diS_sf"/>
</dbReference>
<dbReference type="InterPro" id="IPR020089">
    <property type="entry name" value="PTN/MK_N_dom"/>
</dbReference>
<dbReference type="InterPro" id="IPR037122">
    <property type="entry name" value="PTN/MK_N_dom_sf"/>
</dbReference>
<dbReference type="InterPro" id="IPR020092">
    <property type="entry name" value="PTN_MK_heparin-bd_GF_CS"/>
</dbReference>
<dbReference type="PANTHER" id="PTHR13850:SF2">
    <property type="entry name" value="MIDKINE"/>
    <property type="match status" value="1"/>
</dbReference>
<dbReference type="PANTHER" id="PTHR13850">
    <property type="entry name" value="PLEIOTROPHIN FAMILY MEMBER"/>
    <property type="match status" value="1"/>
</dbReference>
<dbReference type="Pfam" id="PF01091">
    <property type="entry name" value="PTN_MK_C"/>
    <property type="match status" value="1"/>
</dbReference>
<dbReference type="Pfam" id="PF05196">
    <property type="entry name" value="PTN_MK_N"/>
    <property type="match status" value="1"/>
</dbReference>
<dbReference type="PRINTS" id="PR00269">
    <property type="entry name" value="PTNMIDKINE"/>
</dbReference>
<dbReference type="SMART" id="SM00193">
    <property type="entry name" value="PTN"/>
    <property type="match status" value="1"/>
</dbReference>
<dbReference type="SUPFAM" id="SSF57288">
    <property type="entry name" value="Midkine"/>
    <property type="match status" value="2"/>
</dbReference>
<dbReference type="PROSITE" id="PS00619">
    <property type="entry name" value="PTN_MK_1"/>
    <property type="match status" value="1"/>
</dbReference>
<dbReference type="PROSITE" id="PS00620">
    <property type="entry name" value="PTN_MK_2"/>
    <property type="match status" value="1"/>
</dbReference>
<evidence type="ECO:0000250" key="1"/>
<evidence type="ECO:0000250" key="2">
    <source>
        <dbReference type="UniProtKB" id="P21741"/>
    </source>
</evidence>
<evidence type="ECO:0000255" key="3"/>
<evidence type="ECO:0000269" key="4">
    <source>
    </source>
</evidence>
<evidence type="ECO:0000269" key="5">
    <source>
    </source>
</evidence>
<evidence type="ECO:0000269" key="6">
    <source>
    </source>
</evidence>
<evidence type="ECO:0000269" key="7">
    <source>
    </source>
</evidence>
<evidence type="ECO:0000269" key="8">
    <source>
    </source>
</evidence>
<evidence type="ECO:0000269" key="9">
    <source>
    </source>
</evidence>
<evidence type="ECO:0000269" key="10">
    <source>
    </source>
</evidence>
<evidence type="ECO:0000269" key="11">
    <source>
    </source>
</evidence>
<evidence type="ECO:0000269" key="12">
    <source>
    </source>
</evidence>
<evidence type="ECO:0000269" key="13">
    <source>
    </source>
</evidence>
<evidence type="ECO:0000269" key="14">
    <source>
    </source>
</evidence>
<evidence type="ECO:0000269" key="15">
    <source>
    </source>
</evidence>
<evidence type="ECO:0000269" key="16">
    <source>
    </source>
</evidence>
<evidence type="ECO:0000269" key="17">
    <source>
    </source>
</evidence>
<evidence type="ECO:0000269" key="18">
    <source>
    </source>
</evidence>
<evidence type="ECO:0000269" key="19">
    <source>
    </source>
</evidence>
<evidence type="ECO:0000269" key="20">
    <source>
    </source>
</evidence>
<evidence type="ECO:0000269" key="21">
    <source>
    </source>
</evidence>
<evidence type="ECO:0000269" key="22">
    <source>
    </source>
</evidence>
<evidence type="ECO:0000269" key="23">
    <source>
    </source>
</evidence>
<evidence type="ECO:0000269" key="24">
    <source>
    </source>
</evidence>
<evidence type="ECO:0000269" key="25">
    <source>
    </source>
</evidence>
<evidence type="ECO:0000303" key="26">
    <source>
    </source>
</evidence>
<evidence type="ECO:0000303" key="27">
    <source>
    </source>
</evidence>
<evidence type="ECO:0000303" key="28">
    <source>
    </source>
</evidence>
<evidence type="ECO:0000305" key="29"/>
<evidence type="ECO:0000312" key="30">
    <source>
        <dbReference type="MGI" id="MGI:96949"/>
    </source>
</evidence>
<protein>
    <recommendedName>
        <fullName evidence="28">Midkine</fullName>
        <shortName evidence="26">MK</shortName>
    </recommendedName>
    <alternativeName>
        <fullName evidence="27">Retanoic acid-responsive protein</fullName>
    </alternativeName>
    <alternativeName>
        <fullName>Retinoic acid-induced differentiation factor</fullName>
    </alternativeName>
</protein>
<gene>
    <name evidence="30" type="primary">Mdk</name>
    <name type="synonym">Mk</name>
</gene>
<sequence length="140" mass="15434">MQHRGFFLLALLALLVVTSAVAKKKEKVKKGSECSEWTWGPCTPSSKDCGMGFREGTCGAQTQRVHCKVPCNWKKEFGADCKYKFESWGACDGSTGTKARQGTLKKARYNAQCQETIRVTKPCTSKTKSKTKAKKGKGKD</sequence>
<organism>
    <name type="scientific">Mus musculus</name>
    <name type="common">Mouse</name>
    <dbReference type="NCBI Taxonomy" id="10090"/>
    <lineage>
        <taxon>Eukaryota</taxon>
        <taxon>Metazoa</taxon>
        <taxon>Chordata</taxon>
        <taxon>Craniata</taxon>
        <taxon>Vertebrata</taxon>
        <taxon>Euteleostomi</taxon>
        <taxon>Mammalia</taxon>
        <taxon>Eutheria</taxon>
        <taxon>Euarchontoglires</taxon>
        <taxon>Glires</taxon>
        <taxon>Rodentia</taxon>
        <taxon>Myomorpha</taxon>
        <taxon>Muroidea</taxon>
        <taxon>Muridae</taxon>
        <taxon>Murinae</taxon>
        <taxon>Mus</taxon>
        <taxon>Mus</taxon>
    </lineage>
</organism>
<reference key="1">
    <citation type="journal article" date="1990" name="J. Biol. Chem.">
        <title>Structure of a retinoic acid-responsive gene, MK, which is transiently activated during the differentiation of embryonal carcinoma cells and the mid-gestation period of mouse embryogenesis.</title>
        <authorList>
            <person name="Matsubara S."/>
            <person name="Tomomura M."/>
            <person name="Kadomatsu K."/>
            <person name="Muramatsu T."/>
        </authorList>
    </citation>
    <scope>NUCLEOTIDE SEQUENCE [GENOMIC DNA / MRNA]</scope>
    <scope>INDUCTION</scope>
</reference>
<reference key="2">
    <citation type="journal article" date="1990" name="J. Biol. Chem.">
        <title>A retinoic acid-responsive gene, MK, found in the teratocarcinoma system. Heterogeneity of the transcript and the nature of the translation product.</title>
        <authorList>
            <person name="Tomomura M."/>
            <person name="Kadomatsu K."/>
            <person name="Matsubara S."/>
            <person name="Muramatsu T."/>
        </authorList>
    </citation>
    <scope>NUCLEOTIDE SEQUENCE [MRNA]</scope>
</reference>
<reference key="3">
    <citation type="journal article" date="1988" name="Biochem. Biophys. Res. Commun.">
        <title>cDNA cloning and sequencing of a new gene intensely expressed in early differentiation stages of embryonal carcinoma cells and in mid-gestation period of mouse embryogenesis.</title>
        <authorList>
            <person name="Kadomatsu K."/>
            <person name="Tomomura M."/>
            <person name="Muramatsu T."/>
        </authorList>
    </citation>
    <scope>NUCLEOTIDE SEQUENCE [MRNA]</scope>
</reference>
<reference key="4">
    <citation type="journal article" date="2004" name="Genome Res.">
        <title>The status, quality, and expansion of the NIH full-length cDNA project: the Mammalian Gene Collection (MGC).</title>
        <authorList>
            <consortium name="The MGC Project Team"/>
        </authorList>
    </citation>
    <scope>NUCLEOTIDE SEQUENCE [LARGE SCALE MRNA]</scope>
    <source>
        <strain>FVB/N</strain>
        <tissue>Salivary gland</tissue>
    </source>
</reference>
<reference key="5">
    <citation type="journal article" date="1996" name="J. Biochem.">
        <title>Midkine, a heparin-binding growth/differentiation factor, exhibits nerve cell adhesion and guidance activity for neurite outgrowth in vitro.</title>
        <authorList>
            <person name="Kaneda N."/>
            <person name="Talukder A.H."/>
            <person name="Nishiyama H."/>
            <person name="Koizumi S."/>
            <person name="Muramatsu T."/>
        </authorList>
    </citation>
    <scope>NUCLEOTIDE SEQUENCE OF 1-42</scope>
</reference>
<reference key="6">
    <citation type="journal article" date="1997" name="J. Biochem.">
        <title>Expression of syndecan-1 and -3 during embryogenesis of the central nervous system in relation to binding with midkine.</title>
        <authorList>
            <person name="Nakanishi T."/>
            <person name="Kadomatsu K."/>
            <person name="Okamoto T."/>
            <person name="Ichihara-Tanaka K."/>
            <person name="Kojima T."/>
            <person name="Saito H."/>
            <person name="Tomoda Y."/>
            <person name="Muramatsu T."/>
        </authorList>
    </citation>
    <scope>INTERACTION WITH SDC1 AND SDC3</scope>
</reference>
<reference key="7">
    <citation type="journal article" date="1998" name="Genes Cells">
        <title>Disruption of the midkine gene (Mdk) resulted in altered expression of a calcium binding protein in the hippocampus of infant mice and their abnormal behaviour.</title>
        <authorList>
            <person name="Nakamura E."/>
            <person name="Kadomatsu K."/>
            <person name="Yuasa S."/>
            <person name="Muramatsu H."/>
            <person name="Mamiya T."/>
            <person name="Nabeshima T."/>
            <person name="Fan Q.W."/>
            <person name="Ishiguro K."/>
            <person name="Igakura T."/>
            <person name="Matsubara S."/>
            <person name="Kaname T."/>
            <person name="Horiba M."/>
            <person name="Saito H."/>
            <person name="Muramatsu T."/>
        </authorList>
    </citation>
    <scope>DISRUPTION PHENOTYPE</scope>
    <scope>FUNCTION</scope>
</reference>
<reference key="8">
    <citation type="journal article" date="1999" name="J. Biol. Chem.">
        <title>A receptor-like protein-tyrosine phosphatase PTPzeta/RPTPbeta binds a heparin-binding growth factor midkine. Involvement of arginine 78 of midkine in the high affinity binding to PTPzeta.</title>
        <authorList>
            <person name="Maeda N."/>
            <person name="Ichihara-Tanaka K."/>
            <person name="Kimura T."/>
            <person name="Kadomatsu K."/>
            <person name="Muramatsu T."/>
            <person name="Noda M."/>
        </authorList>
    </citation>
    <scope>MUTAGENESIS OF ARG-100; LYS-105 AND LYS-106</scope>
    <scope>INTERACTION WITH PTPRZ1</scope>
    <scope>SITE</scope>
</reference>
<reference key="9">
    <citation type="journal article" date="2000" name="J. Biol. Chem.">
        <title>Neuronal cell adhesion, mediated by the heparin-binding neuroregulatory factor midkine, is specifically inhibited by chondroitin sulfate E. Structural ans functional implications of the over-sulfated chondroitin sulfate.</title>
        <authorList>
            <person name="Ueoka C."/>
            <person name="Kaneda N."/>
            <person name="Okazaki I."/>
            <person name="Nadanaka S."/>
            <person name="Muramatsu T."/>
            <person name="Sugahara K."/>
        </authorList>
    </citation>
    <scope>FUNCTION</scope>
</reference>
<reference key="10">
    <citation type="journal article" date="2000" name="J. Clin. Invest.">
        <title>Neointima formation in a restenosis model is suppressed in midkine-deficient mice.</title>
        <authorList>
            <person name="Horiba M."/>
            <person name="Kadomatsu K."/>
            <person name="Nakamura E."/>
            <person name="Muramatsu H."/>
            <person name="Ikematsu S."/>
            <person name="Sakuma S."/>
            <person name="Hayashi K."/>
            <person name="Yuzawa Y."/>
            <person name="Matsuo S."/>
            <person name="Kuzuya M."/>
            <person name="Kaname T."/>
            <person name="Hirai M."/>
            <person name="Saito H."/>
            <person name="Muramatsu T."/>
        </authorList>
    </citation>
    <scope>FUNCTION</scope>
</reference>
<reference key="11">
    <citation type="journal article" date="2001" name="Glycoconj. J.">
        <title>Glypican-2 binds to midkine: the role of glypican-2 in neuronal cell adhesion and neurite outgrowth.</title>
        <authorList>
            <person name="Kurosawa N."/>
            <person name="Chen G.Y."/>
            <person name="Kadomatsu K."/>
            <person name="Ikematsu S."/>
            <person name="Sakuma S."/>
            <person name="Muramatsu T."/>
        </authorList>
    </citation>
    <scope>INTERACTION WITH SDC3</scope>
</reference>
<reference key="12">
    <citation type="journal article" date="2004" name="Am. J. Pathol.">
        <title>Lack of the growth factor midkine enhances survival against cisplatin-induced renal damage.</title>
        <authorList>
            <person name="Kawai H."/>
            <person name="Sato W."/>
            <person name="Yuzawa Y."/>
            <person name="Kosugi T."/>
            <person name="Matsuo S."/>
            <person name="Takei Y."/>
            <person name="Kadomatsu K."/>
            <person name="Muramatsu T."/>
        </authorList>
    </citation>
    <scope>FUNCTION</scope>
</reference>
<reference key="13">
    <citation type="journal article" date="2004" name="Liver Int.">
        <title>The role of midkine and pleiotrophin in liver regeneration.</title>
        <authorList>
            <person name="Ochiai K."/>
            <person name="Muramatsu H."/>
            <person name="Yamamoto S."/>
            <person name="Ando H."/>
            <person name="Muramatsu T."/>
        </authorList>
    </citation>
    <scope>FUNCTION</scope>
</reference>
<reference key="14">
    <citation type="journal article" date="2006" name="Circulation">
        <title>Midkine plays a protective role against cardiac ischemia/reperfusion injury through a reduction of apoptotic reaction.</title>
        <authorList>
            <person name="Horiba M."/>
            <person name="Kadomatsu K."/>
            <person name="Yasui K."/>
            <person name="Lee J.K."/>
            <person name="Takenaka H."/>
            <person name="Sumida A."/>
            <person name="Kamiya K."/>
            <person name="Chen S."/>
            <person name="Sakuma S."/>
            <person name="Muramatsu T."/>
            <person name="Kodama I."/>
        </authorList>
    </citation>
    <scope>FUNCTION</scope>
    <scope>INDUCTION</scope>
</reference>
<reference key="15">
    <citation type="journal article" date="2006" name="Genes Cells">
        <title>Female infertility in mice deficient in midkine and pleiotrophin, which form a distinct family of growth factors.</title>
        <authorList>
            <person name="Muramatsu H."/>
            <person name="Zou P."/>
            <person name="Kurosawa N."/>
            <person name="Ichihara-Tanaka K."/>
            <person name="Maruyama K."/>
            <person name="Inoh K."/>
            <person name="Sakai T."/>
            <person name="Chen L."/>
            <person name="Sato M."/>
            <person name="Muramatsu T."/>
        </authorList>
    </citation>
    <scope>DISRUPTION PHENOTYPE</scope>
    <scope>TISSUE SPECIFICITY</scope>
    <scope>FUNCTION</scope>
</reference>
<reference key="16">
    <citation type="journal article" date="2006" name="J. Biol. Chem.">
        <title>Neuroglycan C is a novel midkine receptor involved in process elongation of oligodendroglial precursor-like cells.</title>
        <authorList>
            <person name="Ichihara-Tanaka K."/>
            <person name="Oohira A."/>
            <person name="Rumsby M."/>
            <person name="Muramatsu T."/>
        </authorList>
    </citation>
    <scope>INTERACTION WITH CSPG5</scope>
    <scope>FUNCTION</scope>
</reference>
<reference key="17">
    <citation type="journal article" date="2006" name="J. Neurochem.">
        <title>Midkine, a heparin-binding growth factor, is expressed in neural precursor cells and promotes their growth.</title>
        <authorList>
            <person name="Zou P."/>
            <person name="Muramatsu H."/>
            <person name="Miyata T."/>
            <person name="Muramatsu T."/>
        </authorList>
    </citation>
    <scope>FUNCTION</scope>
</reference>
<reference key="18">
    <citation type="journal article" date="2006" name="Lab. Invest.">
        <title>Mice doubly deficient in the midkine and pleiotrophin genes exhibit deficits in the expression of beta-tectorin gene and in auditory response.</title>
        <authorList>
            <person name="Zou P."/>
            <person name="Muramatsu H."/>
            <person name="Sone M."/>
            <person name="Hayashi H."/>
            <person name="Nakashima T."/>
            <person name="Muramatsu T."/>
        </authorList>
    </citation>
    <scope>DISRUPTION PHENOTYPE</scope>
    <scope>FUNCTION</scope>
</reference>
<reference key="19">
    <citation type="journal article" date="2009" name="Am. J. Physiol.">
        <title>Midkine prevents ventricular remodeling and improves long-term survival after myocardial infarction.</title>
        <authorList>
            <person name="Takenaka H."/>
            <person name="Horiba M."/>
            <person name="Ishiguro H."/>
            <person name="Sumida A."/>
            <person name="Hojo M."/>
            <person name="Usui A."/>
            <person name="Akita T."/>
            <person name="Sakuma S."/>
            <person name="Ueda Y."/>
            <person name="Kodama I."/>
            <person name="Kadomatsu K."/>
        </authorList>
    </citation>
    <scope>FUNCTION</scope>
    <scope>INDUCTION</scope>
</reference>
<reference key="20">
    <citation type="journal article" date="2010" name="J. Bone Miner. Res.">
        <title>Increased trabecular bone formation in mice lacking the growth factor midkine.</title>
        <authorList>
            <person name="Neunaber C."/>
            <person name="Catala-Lehnen P."/>
            <person name="Beil F.T."/>
            <person name="Marshall R.P."/>
            <person name="Kanbach V."/>
            <person name="Baranowsky A."/>
            <person name="Lehmann W."/>
            <person name="Streichert T."/>
            <person name="Ignatius A."/>
            <person name="Muramatsu T."/>
            <person name="Schinke T."/>
            <person name="Amling M."/>
        </authorList>
    </citation>
    <scope>DISRUPTION PHENOTYPE</scope>
    <scope>FUNCTION</scope>
</reference>
<reference key="21">
    <citation type="journal article" date="2011" name="Bone">
        <title>Midkine-deficiency increases the anabolic response of cortical bone to mechanical loading.</title>
        <authorList>
            <person name="Liedert A."/>
            <person name="Mattausch L."/>
            <person name="Roentgen V."/>
            <person name="Blakytny R."/>
            <person name="Vogele D."/>
            <person name="Pahl M."/>
            <person name="Bindl R."/>
            <person name="Neunaber C."/>
            <person name="Schinke T."/>
            <person name="Harroch S."/>
            <person name="Amling M."/>
            <person name="Ignatius A."/>
        </authorList>
    </citation>
    <scope>FUNCTION</scope>
</reference>
<reference key="22">
    <citation type="journal article" date="2012" name="J. Immunol.">
        <title>Midkine inhibits inducible regulatory T cell differentiation by suppressing the development of tolerogenic dendritic cells.</title>
        <authorList>
            <person name="Sonobe Y."/>
            <person name="Li H."/>
            <person name="Jin S."/>
            <person name="Kishida S."/>
            <person name="Kadomatsu K."/>
            <person name="Takeuchi H."/>
            <person name="Mizuno T."/>
            <person name="Suzumura A."/>
        </authorList>
    </citation>
    <scope>INDUCTION</scope>
</reference>
<reference key="23">
    <citation type="journal article" date="2014" name="Blood">
        <title>The cytokine midkine supports neutrophil trafficking during acute inflammation by promoting adhesion via beta2 integrins (CD11/CD18).</title>
        <authorList>
            <person name="Weckbach L.T."/>
            <person name="Gola A."/>
            <person name="Winkelmann M."/>
            <person name="Jakob S.M."/>
            <person name="Groesser L."/>
            <person name="Borgolte J."/>
            <person name="Pogoda F."/>
            <person name="Pick R."/>
            <person name="Pruenster M."/>
            <person name="Mueller-Hoecker J."/>
            <person name="Deindl E."/>
            <person name="Sperandio M."/>
            <person name="Walzog B."/>
        </authorList>
    </citation>
    <scope>FUNCTION</scope>
</reference>
<reference key="24">
    <citation type="journal article" date="2014" name="PLoS ONE">
        <title>Midkine-deficiency delays chondrogenesis during the early phase of fracture healing in mice.</title>
        <authorList>
            <person name="Haffner-Luntzer M."/>
            <person name="Heilmann A."/>
            <person name="Rapp A.E."/>
            <person name="Beie S."/>
            <person name="Schinke T."/>
            <person name="Amling M."/>
            <person name="Ignatius A."/>
            <person name="Liedert A."/>
        </authorList>
    </citation>
    <scope>INDUCTION</scope>
    <scope>FUNCTION</scope>
</reference>
<reference key="25">
    <citation type="journal article" date="2017" name="Am. J. Pathol.">
        <title>Growth Factor Midkine Promotes T-Cell Activation through Nuclear Factor of Activated T Cells Signaling and Th1 Cell Differentiation in Lupus Nephritis.</title>
        <authorList>
            <person name="Masuda T."/>
            <person name="Maeda K."/>
            <person name="Sato W."/>
            <person name="Kosugi T."/>
            <person name="Sato Y."/>
            <person name="Kojima H."/>
            <person name="Kato N."/>
            <person name="Ishimoto T."/>
            <person name="Tsuboi N."/>
            <person name="Uchimura K."/>
            <person name="Yuzawa Y."/>
            <person name="Maruyama S."/>
            <person name="Kadomatsu K."/>
        </authorList>
    </citation>
    <scope>FUNCTION</scope>
</reference>
<reference key="26">
    <citation type="journal article" date="2018" name="EBioMedicine">
        <title>Midkine Controls Arteriogenesis by Regulating the Bioavailability of Vascular Endothelial Growth Factor A and the Expression of Nitric Oxide Synthase 1 and 3.</title>
        <authorList>
            <person name="Lautz T."/>
            <person name="Lasch M."/>
            <person name="Borgolte J."/>
            <person name="Troidl K."/>
            <person name="Pagel J.I."/>
            <person name="Caballero-Martinez A."/>
            <person name="Kleinert E.C."/>
            <person name="Walzog B."/>
            <person name="Deindl E."/>
        </authorList>
    </citation>
    <scope>FUNCTION</scope>
</reference>
<keyword id="KW-0217">Developmental protein</keyword>
<keyword id="KW-0221">Differentiation</keyword>
<keyword id="KW-1015">Disulfide bond</keyword>
<keyword id="KW-0339">Growth factor</keyword>
<keyword id="KW-0358">Heparin-binding</keyword>
<keyword id="KW-0497">Mitogen</keyword>
<keyword id="KW-1185">Reference proteome</keyword>
<keyword id="KW-0964">Secreted</keyword>
<keyword id="KW-0732">Signal</keyword>
<name>MK_MOUSE</name>
<comment type="function">
    <text evidence="2 4 6 7 9 10 11 12 13 14 15 16 17 18 21 22 23 24">Secreted protein that functions as a cytokine and growth factor and mediates its signal through cell-surface proteoglycan and non-proteoglycan receptors (PubMed:16901907). Binds cell-surface proteoglycan receptors via their chondroitin sulfate (CS) groups (PubMed:17230638). Thereby regulates many processes like inflammatory response, cell proliferation, cell adhesion, cell growth, cell survival, tissue regeneration, cell differentiation and cell migration (PubMed:10683378, PubMed:15482347, PubMed:15509530, PubMed:17015789, PubMed:17230638, PubMed:19060126, PubMed:24458438, PubMed:25551381, PubMed:28183532, PubMed:29233575). Participates in inflammatory processes by exerting two different activities. Firstly, mediates neutrophils and macrophages recruitment to the sites of inflammation both by direct action by cooperating namely with ITGB2 via LRP1 and by inducing chemokine expression (PubMed:10683378, PubMed:15509530, PubMed:24458438, PubMed:28183532). This inflammation can be accompanied by epithelial cell survival and smooth muscle cell migration after renal and vessel damage, respectively (PubMed:10683378, PubMed:15509530). Secondly, suppresses the development of tolerogenic dendric cells thereby inhibiting the differentiation of regulatory T cells and also promote T cell expansion through NFAT signaling and Th1 cell differentiation (PubMed:28183532). Promotes tissue regeneration after injury or trauma. After heart damage negatively regulates the recruitment of inflammatory cells and mediates cell survival through activation of anti-apoptotic signaling pathways via MAPKs and AKT pathways through the activation of angiogenesis (PubMed:17015789, PubMed:19060126). Also facilitates liver regeneration as well as bone repair by recruiting macrophage at trauma site and by promoting cartilage development by facilitating chondrocyte differentiation (PubMed:15482347, PubMed:25551381). Plays a role in brain by promoting neural precursor cells survival and growth through interaction with heparan sulfate proteoglycans (PubMed:17230638). Binds PTPRZ1 and promotes neuronal migration and embryonic neurons survival (By similarity). Binds SDC3 or GPC2 and mediates neurite outgrowth and cell adhesion (By similarity). Binds chondroitin sulfate E and heparin leading to inhibition of neuronal cell adhesion induced by binding with GPC2 (PubMed:10978312). Binds CSPG5 and promotes elongation of oligodendroglial precursor-like cells (PubMed:16901907). Also binds ITGA6:ITGB1 complex; this interaction mediates MDK-induced neurite outgrowth (By similarity). Binds LRP1; promotes neuronal survival (By similarity). Binds ITGA4:ITGB1 complex; this interaction mediates MDK-induced osteoblast cells migration through PXN phosphorylation (By similarity). Binds anaplastic lymphoma kinase (ALK) which induces ALK activation and subsequent phosphorylation of the insulin receptor substrate (IRS1), followed by the activation of mitogen-activated protein kinase (MAPK) and PI3-kinase, and the induction of cell proliferation (By similarity). Promotes epithelial to mesenchymal transition through interaction with NOTCH2 (By similarity). During arteriogenesis, plays a role in vascular endothelial cell proliferation by inducing VEGFA expression and release which in turn induces nitric oxide synthase expression. Moreover activates vasodilation through nitric oxide synthase activation (PubMed:29233575). Negatively regulates bone formation in response to mechanical load by inhibiting Wnt/beta-catenin signaling in osteoblasts (PubMed:20200993, PubMed:21185956). In addition plays a role in hippocampal development, working memory, auditory response, early fetal adrenal gland development and the female reproductive system (PubMed:10096022, PubMed:16619002, PubMed:17121547).</text>
</comment>
<comment type="subunit">
    <text evidence="2 5 8 12 25">Homodimer. Interacts with ALK. Interacts with LRP1; promotes neuronal survival. Interacts with LRP2. Interacts with NCAM1 (By similarity). Interacts (via C-terminal) with PTPRZ1 (via chondroitin sulfate chains); this interaction is inhibited by PTN; this interaction promotes neuronal migration (PubMed:10212223). Interacts with NCL; this interaction promotes NCL clustering and lateral movements of this complex into lipid rafts leading to MDK internalization. Interacts with LRP6 and LRP8: this interaction is calcium dependent. Interacts with ITGA4. Interacts with ITGA6. Interacts with ITGB1. Interacts with ITGA4:ITGB1 complex; this interaction mediates MDK-induced osteoblast cells migration through PXN phosphorylation. Interacts with ITGA6:ITGB1 complex; this interaction mediates MDK-induced neurite outgrowth. Interacts with NOTCH2; this interactio mediates a nuclear accumulation of NOTCH2 and therefore activation of NOTCH2 signaling leading to interaction between HES1 and STAT3. Interacts with GPC2 (via heparan sulfate chain); this interaction is inhibited by heparin followed by chondroitin sulfate E; this interaction induces GPC2 clustering through heparan sulfate chain; this interaction induces neuronal cell adhesion and neurite outgrowth (By similarity). Interacts with SDC3; this interaction induces SDC3 clustering; this interaction induces neuronal cell adhesion and neurite outgrowth (PubMed:12084985, PubMed:9089390). Interacts with SDC1 (PubMed:9089390). Interacts with CSPG5; this interaction promotes elongation of oligodendroglial precursor-like cells (PubMed:16901907).</text>
</comment>
<comment type="subcellular location">
    <subcellularLocation>
        <location evidence="29">Secreted</location>
    </subcellularLocation>
</comment>
<comment type="tissue specificity">
    <text evidence="14">Expressed in the follicular epithelium and granulosa cells of the ovary.</text>
</comment>
<comment type="developmental stage">
    <text>Is expressed temporarily during the early stages of retinoic acid-induced differentiation of embryonal carcinoma cells and during the mid-gestation period of mouse embryogenesis. In late embryos and in adults expression is restricted to the kidney.</text>
</comment>
<comment type="induction">
    <text evidence="13 16 19 20 22">By retinoic acid (PubMed:2345177). Induced after tissue damage (PubMed:17015789, PubMed:19060126). Induced by inflammatory cells, in particular, CD4(+) T cells under inflammatory conditions (PubMed:22323540). Induced during the early and intermediate phase of fracture repair (PubMed:25551381).</text>
</comment>
<comment type="disruption phenotype">
    <text evidence="4 11 14 17">Homozygous knockout MDK mice are viable and reproduce normally. Mice have no apparent abnormalities except that postnatal development of the hippocampus is delayed. However 4 weeks after birth, mice have a deficit in their working memory and have an increased anxiety (PubMed:10096022). Knockout MDK mice exhibit low to moderate levels of auditory deficits and generally respond at around 50 dB. PTN and MDK double knockoutmice have a deficit of auditory response (PubMed:16619002). PTN and MDK double knockout mice are born in only one third the number expected by Mendelian segregation and 4 weeks after birth weigh about half as much as wild-type mice. Most of the female are infertile. Both male and female one-month-old mice show a defect in spontaneous locomotive activity of 50-60% of that of wild-type mice. Although the difference in activity decrease with age, the activity of 3-month-old male double knockout mice is still about 80% of that of the wild-type mice. The diestrus and proestrus periods are long and the estrus period is short. Furthermore, vaginal abnormality is found in about half of the double deficient mice (PubMed:17121547). Homozygous knockout MDK mice display not significant difference from wild-type until the age of 6 month. Mice at 12 and 18 months of age show an increased trabecular bone volume, accompanied by cortical porosity (PubMed:20200993).</text>
</comment>
<comment type="similarity">
    <text evidence="29">Belongs to the pleiotrophin family.</text>
</comment>